<accession>Q8DY60</accession>
<dbReference type="EC" id="7.-.-.-"/>
<dbReference type="EMBL" id="AE009948">
    <property type="protein sequence ID" value="AAN00497.1"/>
    <property type="molecule type" value="Genomic_DNA"/>
</dbReference>
<dbReference type="RefSeq" id="NP_688624.1">
    <property type="nucleotide sequence ID" value="NC_004116.1"/>
</dbReference>
<dbReference type="RefSeq" id="WP_000651245.1">
    <property type="nucleotide sequence ID" value="NC_004116.1"/>
</dbReference>
<dbReference type="SMR" id="Q8DY60"/>
<dbReference type="STRING" id="208435.SAG1633"/>
<dbReference type="KEGG" id="sag:SAG1633"/>
<dbReference type="PATRIC" id="fig|208435.3.peg.1644"/>
<dbReference type="HOGENOM" id="CLU_000604_86_7_9"/>
<dbReference type="OrthoDB" id="501320at2"/>
<dbReference type="Proteomes" id="UP000000821">
    <property type="component" value="Chromosome"/>
</dbReference>
<dbReference type="GO" id="GO:0043190">
    <property type="term" value="C:ATP-binding cassette (ABC) transporter complex"/>
    <property type="evidence" value="ECO:0007669"/>
    <property type="project" value="TreeGrafter"/>
</dbReference>
<dbReference type="GO" id="GO:0005524">
    <property type="term" value="F:ATP binding"/>
    <property type="evidence" value="ECO:0007669"/>
    <property type="project" value="UniProtKB-KW"/>
</dbReference>
<dbReference type="GO" id="GO:0016887">
    <property type="term" value="F:ATP hydrolysis activity"/>
    <property type="evidence" value="ECO:0007669"/>
    <property type="project" value="InterPro"/>
</dbReference>
<dbReference type="GO" id="GO:0042626">
    <property type="term" value="F:ATPase-coupled transmembrane transporter activity"/>
    <property type="evidence" value="ECO:0007669"/>
    <property type="project" value="TreeGrafter"/>
</dbReference>
<dbReference type="CDD" id="cd03225">
    <property type="entry name" value="ABC_cobalt_CbiO_domain1"/>
    <property type="match status" value="2"/>
</dbReference>
<dbReference type="FunFam" id="3.40.50.300:FF:001422">
    <property type="entry name" value="Cobalt ABC transporter ATP-binding protein"/>
    <property type="match status" value="1"/>
</dbReference>
<dbReference type="FunFam" id="3.40.50.300:FF:000224">
    <property type="entry name" value="Energy-coupling factor transporter ATP-binding protein EcfA"/>
    <property type="match status" value="1"/>
</dbReference>
<dbReference type="Gene3D" id="3.40.50.300">
    <property type="entry name" value="P-loop containing nucleotide triphosphate hydrolases"/>
    <property type="match status" value="2"/>
</dbReference>
<dbReference type="InterPro" id="IPR003593">
    <property type="entry name" value="AAA+_ATPase"/>
</dbReference>
<dbReference type="InterPro" id="IPR022216">
    <property type="entry name" value="ABC_Co_transporter"/>
</dbReference>
<dbReference type="InterPro" id="IPR003439">
    <property type="entry name" value="ABC_transporter-like_ATP-bd"/>
</dbReference>
<dbReference type="InterPro" id="IPR017871">
    <property type="entry name" value="ABC_transporter-like_CS"/>
</dbReference>
<dbReference type="InterPro" id="IPR015856">
    <property type="entry name" value="ABC_transpr_CbiO/EcfA_su"/>
</dbReference>
<dbReference type="InterPro" id="IPR050095">
    <property type="entry name" value="ECF_ABC_transporter_ATP-bd"/>
</dbReference>
<dbReference type="InterPro" id="IPR027417">
    <property type="entry name" value="P-loop_NTPase"/>
</dbReference>
<dbReference type="NCBIfam" id="NF010167">
    <property type="entry name" value="PRK13648.1"/>
    <property type="match status" value="2"/>
</dbReference>
<dbReference type="PANTHER" id="PTHR43553:SF26">
    <property type="entry name" value="ABC TRANSPORTER ATP-BINDING PROTEIN BC_2655-RELATED"/>
    <property type="match status" value="1"/>
</dbReference>
<dbReference type="PANTHER" id="PTHR43553">
    <property type="entry name" value="HEAVY METAL TRANSPORTER"/>
    <property type="match status" value="1"/>
</dbReference>
<dbReference type="Pfam" id="PF00005">
    <property type="entry name" value="ABC_tran"/>
    <property type="match status" value="2"/>
</dbReference>
<dbReference type="Pfam" id="PF12558">
    <property type="entry name" value="DUF3744"/>
    <property type="match status" value="1"/>
</dbReference>
<dbReference type="SMART" id="SM00382">
    <property type="entry name" value="AAA"/>
    <property type="match status" value="2"/>
</dbReference>
<dbReference type="SUPFAM" id="SSF52540">
    <property type="entry name" value="P-loop containing nucleoside triphosphate hydrolases"/>
    <property type="match status" value="2"/>
</dbReference>
<dbReference type="PROSITE" id="PS00211">
    <property type="entry name" value="ABC_TRANSPORTER_1"/>
    <property type="match status" value="2"/>
</dbReference>
<dbReference type="PROSITE" id="PS50893">
    <property type="entry name" value="ABC_TRANSPORTER_2"/>
    <property type="match status" value="2"/>
</dbReference>
<organism>
    <name type="scientific">Streptococcus agalactiae serotype V (strain ATCC BAA-611 / 2603 V/R)</name>
    <dbReference type="NCBI Taxonomy" id="208435"/>
    <lineage>
        <taxon>Bacteria</taxon>
        <taxon>Bacillati</taxon>
        <taxon>Bacillota</taxon>
        <taxon>Bacilli</taxon>
        <taxon>Lactobacillales</taxon>
        <taxon>Streptococcaceae</taxon>
        <taxon>Streptococcus</taxon>
    </lineage>
</organism>
<reference key="1">
    <citation type="journal article" date="2002" name="Proc. Natl. Acad. Sci. U.S.A.">
        <title>Complete genome sequence and comparative genomic analysis of an emerging human pathogen, serotype V Streptococcus agalactiae.</title>
        <authorList>
            <person name="Tettelin H."/>
            <person name="Masignani V."/>
            <person name="Cieslewicz M.J."/>
            <person name="Eisen J.A."/>
            <person name="Peterson S.N."/>
            <person name="Wessels M.R."/>
            <person name="Paulsen I.T."/>
            <person name="Nelson K.E."/>
            <person name="Margarit I."/>
            <person name="Read T.D."/>
            <person name="Madoff L.C."/>
            <person name="Wolf A.M."/>
            <person name="Beanan M.J."/>
            <person name="Brinkac L.M."/>
            <person name="Daugherty S.C."/>
            <person name="DeBoy R.T."/>
            <person name="Durkin A.S."/>
            <person name="Kolonay J.F."/>
            <person name="Madupu R."/>
            <person name="Lewis M.R."/>
            <person name="Radune D."/>
            <person name="Fedorova N.B."/>
            <person name="Scanlan D."/>
            <person name="Khouri H.M."/>
            <person name="Mulligan S."/>
            <person name="Carty H.A."/>
            <person name="Cline R.T."/>
            <person name="Van Aken S.E."/>
            <person name="Gill J."/>
            <person name="Scarselli M."/>
            <person name="Mora M."/>
            <person name="Iacobini E.T."/>
            <person name="Brettoni C."/>
            <person name="Galli G."/>
            <person name="Mariani M."/>
            <person name="Vegni F."/>
            <person name="Maione D."/>
            <person name="Rinaudo D."/>
            <person name="Rappuoli R."/>
            <person name="Telford J.L."/>
            <person name="Kasper D.L."/>
            <person name="Grandi G."/>
            <person name="Fraser C.M."/>
        </authorList>
    </citation>
    <scope>NUCLEOTIDE SEQUENCE [LARGE SCALE GENOMIC DNA]</scope>
    <source>
        <strain>ATCC BAA-611 / 2603 V/R</strain>
    </source>
</reference>
<comment type="function">
    <text evidence="1">Probably part of an ABC transporter complex. Responsible for energy coupling to the transport system (By similarity).</text>
</comment>
<comment type="subcellular location">
    <subcellularLocation>
        <location evidence="1">Cell membrane</location>
        <topology evidence="1">Peripheral membrane protein</topology>
    </subcellularLocation>
</comment>
<comment type="similarity">
    <text evidence="3">Belongs to the ABC transporter superfamily.</text>
</comment>
<evidence type="ECO:0000250" key="1"/>
<evidence type="ECO:0000255" key="2">
    <source>
        <dbReference type="PROSITE-ProRule" id="PRU00434"/>
    </source>
</evidence>
<evidence type="ECO:0000305" key="3"/>
<sequence>MKDFIEWKDFTFQYDVQSEPTLKGINLSIPKGEKVLILGPSGSGKSTLGHCLNGIIPNTHKGQYSGIFTINHKNAFDLSIYDKSHLVSTVLQDPDGQFIGLTVAEDIAFALENDVVAQEEMASIVEMWAKRLEIAPLLSKRPQDLSGGQKQRVSLAGVLVDDSPILLFDEPLANLDPQSGQDIMALVDRIHQEQDATTIIIEHRLEDVFYERVDRVVLFSDGQIIYNGEPDQLLKTNFLSEYGIREPLYISALKNLGYDFEKQNTMTSIDDFDFSELLIPKMRALDLDKHTDKLLSVQHLSVSYDLENNTLDDVSFDLYKGQRLAIVGKNGAGKSTLAKALCQFIPNNATLIYNNEDVSQDSIKERAERIGYVLQNPNQMISQAMVFDEVALGLRLRGFSDNDIESRVYDILKVCGLYQFRNWPISALSFGQKKRVTIASILILNPEVIILDEPTAGQDMKHYTEMMSFLDKLSCDGHTIVMITHDMQLMLEYTDRAIVIDNGLIVADDHPINILSNTELLKKTHLKKTSLFALADRLGISPQKLTQWYIDNQGGKNG</sequence>
<gene>
    <name type="ordered locus">SAG1633</name>
</gene>
<protein>
    <recommendedName>
        <fullName>Putative ABC transporter ATP-binding protein SAG1633</fullName>
        <ecNumber>7.-.-.-</ecNumber>
    </recommendedName>
</protein>
<proteinExistence type="inferred from homology"/>
<name>Y1633_STRA5</name>
<feature type="chain" id="PRO_0000092089" description="Putative ABC transporter ATP-binding protein SAG1633">
    <location>
        <begin position="1"/>
        <end position="558"/>
    </location>
</feature>
<feature type="domain" description="ABC transporter 1" evidence="2">
    <location>
        <begin position="5"/>
        <end position="246"/>
    </location>
</feature>
<feature type="domain" description="ABC transporter 2" evidence="2">
    <location>
        <begin position="295"/>
        <end position="527"/>
    </location>
</feature>
<feature type="binding site" evidence="2">
    <location>
        <begin position="39"/>
        <end position="46"/>
    </location>
    <ligand>
        <name>ATP</name>
        <dbReference type="ChEBI" id="CHEBI:30616"/>
        <label>1</label>
    </ligand>
</feature>
<feature type="binding site" evidence="2">
    <location>
        <begin position="328"/>
        <end position="335"/>
    </location>
    <ligand>
        <name>ATP</name>
        <dbReference type="ChEBI" id="CHEBI:30616"/>
        <label>2</label>
    </ligand>
</feature>
<keyword id="KW-0067">ATP-binding</keyword>
<keyword id="KW-1003">Cell membrane</keyword>
<keyword id="KW-0472">Membrane</keyword>
<keyword id="KW-0547">Nucleotide-binding</keyword>
<keyword id="KW-1185">Reference proteome</keyword>
<keyword id="KW-0677">Repeat</keyword>
<keyword id="KW-1278">Translocase</keyword>
<keyword id="KW-0813">Transport</keyword>